<feature type="chain" id="PRO_0000079647" description="57 kDa cell wall protein">
    <location>
        <begin position="1"/>
        <end position="9" status="greater than"/>
    </location>
</feature>
<feature type="non-terminal residue" evidence="2">
    <location>
        <position position="9"/>
    </location>
</feature>
<keyword id="KW-0134">Cell wall</keyword>
<keyword id="KW-0903">Direct protein sequencing</keyword>
<keyword id="KW-1185">Reference proteome</keyword>
<keyword id="KW-0964">Secreted</keyword>
<dbReference type="Proteomes" id="UP000084051">
    <property type="component" value="Unplaced"/>
</dbReference>
<dbReference type="GO" id="GO:0005576">
    <property type="term" value="C:extracellular region"/>
    <property type="evidence" value="ECO:0007669"/>
    <property type="project" value="UniProtKB-KW"/>
</dbReference>
<protein>
    <recommendedName>
        <fullName>57 kDa cell wall protein</fullName>
    </recommendedName>
</protein>
<comment type="subcellular location">
    <subcellularLocation>
        <location evidence="1">Secreted</location>
        <location evidence="1">Cell wall</location>
    </subcellularLocation>
</comment>
<name>CWP07_TOBAC</name>
<reference evidence="3" key="1">
    <citation type="journal article" date="1997" name="J. Biol. Chem.">
        <title>Differential extraction and protein sequencing reveals major differences in patterns of primary cell wall proteins from plants.</title>
        <authorList>
            <person name="Robertson D."/>
            <person name="Mitchell G.P."/>
            <person name="Gilroy J.S."/>
            <person name="Gerrish C."/>
            <person name="Bolwell G.P."/>
            <person name="Slabas A.R."/>
        </authorList>
    </citation>
    <scope>PROTEIN SEQUENCE</scope>
    <scope>SUBCELLULAR LOCATION</scope>
</reference>
<accession>P80784</accession>
<evidence type="ECO:0000269" key="1">
    <source>
    </source>
</evidence>
<evidence type="ECO:0000303" key="2">
    <source>
    </source>
</evidence>
<evidence type="ECO:0000305" key="3"/>
<proteinExistence type="evidence at protein level"/>
<sequence>QDPYVDFLK</sequence>
<organism>
    <name type="scientific">Nicotiana tabacum</name>
    <name type="common">Common tobacco</name>
    <dbReference type="NCBI Taxonomy" id="4097"/>
    <lineage>
        <taxon>Eukaryota</taxon>
        <taxon>Viridiplantae</taxon>
        <taxon>Streptophyta</taxon>
        <taxon>Embryophyta</taxon>
        <taxon>Tracheophyta</taxon>
        <taxon>Spermatophyta</taxon>
        <taxon>Magnoliopsida</taxon>
        <taxon>eudicotyledons</taxon>
        <taxon>Gunneridae</taxon>
        <taxon>Pentapetalae</taxon>
        <taxon>asterids</taxon>
        <taxon>lamiids</taxon>
        <taxon>Solanales</taxon>
        <taxon>Solanaceae</taxon>
        <taxon>Nicotianoideae</taxon>
        <taxon>Nicotianeae</taxon>
        <taxon>Nicotiana</taxon>
    </lineage>
</organism>